<protein>
    <recommendedName>
        <fullName evidence="1">Aspartyl/glutamyl-tRNA(Asn/Gln) amidotransferase subunit C</fullName>
        <shortName evidence="1">Asp/Glu-ADT subunit C</shortName>
        <ecNumber evidence="1">6.3.5.-</ecNumber>
    </recommendedName>
</protein>
<reference key="1">
    <citation type="journal article" date="2008" name="Genome Res.">
        <title>Chlamydia trachomatis: genome sequence analysis of lymphogranuloma venereum isolates.</title>
        <authorList>
            <person name="Thomson N.R."/>
            <person name="Holden M.T.G."/>
            <person name="Carder C."/>
            <person name="Lennard N."/>
            <person name="Lockey S.J."/>
            <person name="Marsh P."/>
            <person name="Skipp P."/>
            <person name="O'Connor C.D."/>
            <person name="Goodhead I."/>
            <person name="Norbertzcak H."/>
            <person name="Harris B."/>
            <person name="Ormond D."/>
            <person name="Rance R."/>
            <person name="Quail M.A."/>
            <person name="Parkhill J."/>
            <person name="Stephens R.S."/>
            <person name="Clarke I.N."/>
        </authorList>
    </citation>
    <scope>NUCLEOTIDE SEQUENCE [LARGE SCALE GENOMIC DNA]</scope>
    <source>
        <strain>ATCC VR-902B / DSM 19102 / 434/Bu</strain>
    </source>
</reference>
<evidence type="ECO:0000255" key="1">
    <source>
        <dbReference type="HAMAP-Rule" id="MF_00122"/>
    </source>
</evidence>
<accession>B0B9A9</accession>
<comment type="function">
    <text evidence="1">Allows the formation of correctly charged Asn-tRNA(Asn) or Gln-tRNA(Gln) through the transamidation of misacylated Asp-tRNA(Asn) or Glu-tRNA(Gln) in organisms which lack either or both of asparaginyl-tRNA or glutaminyl-tRNA synthetases. The reaction takes place in the presence of glutamine and ATP through an activated phospho-Asp-tRNA(Asn) or phospho-Glu-tRNA(Gln).</text>
</comment>
<comment type="catalytic activity">
    <reaction evidence="1">
        <text>L-glutamyl-tRNA(Gln) + L-glutamine + ATP + H2O = L-glutaminyl-tRNA(Gln) + L-glutamate + ADP + phosphate + H(+)</text>
        <dbReference type="Rhea" id="RHEA:17521"/>
        <dbReference type="Rhea" id="RHEA-COMP:9681"/>
        <dbReference type="Rhea" id="RHEA-COMP:9684"/>
        <dbReference type="ChEBI" id="CHEBI:15377"/>
        <dbReference type="ChEBI" id="CHEBI:15378"/>
        <dbReference type="ChEBI" id="CHEBI:29985"/>
        <dbReference type="ChEBI" id="CHEBI:30616"/>
        <dbReference type="ChEBI" id="CHEBI:43474"/>
        <dbReference type="ChEBI" id="CHEBI:58359"/>
        <dbReference type="ChEBI" id="CHEBI:78520"/>
        <dbReference type="ChEBI" id="CHEBI:78521"/>
        <dbReference type="ChEBI" id="CHEBI:456216"/>
    </reaction>
</comment>
<comment type="catalytic activity">
    <reaction evidence="1">
        <text>L-aspartyl-tRNA(Asn) + L-glutamine + ATP + H2O = L-asparaginyl-tRNA(Asn) + L-glutamate + ADP + phosphate + 2 H(+)</text>
        <dbReference type="Rhea" id="RHEA:14513"/>
        <dbReference type="Rhea" id="RHEA-COMP:9674"/>
        <dbReference type="Rhea" id="RHEA-COMP:9677"/>
        <dbReference type="ChEBI" id="CHEBI:15377"/>
        <dbReference type="ChEBI" id="CHEBI:15378"/>
        <dbReference type="ChEBI" id="CHEBI:29985"/>
        <dbReference type="ChEBI" id="CHEBI:30616"/>
        <dbReference type="ChEBI" id="CHEBI:43474"/>
        <dbReference type="ChEBI" id="CHEBI:58359"/>
        <dbReference type="ChEBI" id="CHEBI:78515"/>
        <dbReference type="ChEBI" id="CHEBI:78516"/>
        <dbReference type="ChEBI" id="CHEBI:456216"/>
    </reaction>
</comment>
<comment type="subunit">
    <text evidence="1">Heterotrimer of A, B and C subunits.</text>
</comment>
<comment type="similarity">
    <text evidence="1">Belongs to the GatC family.</text>
</comment>
<feature type="chain" id="PRO_1000095272" description="Aspartyl/glutamyl-tRNA(Asn/Gln) amidotransferase subunit C">
    <location>
        <begin position="1"/>
        <end position="100"/>
    </location>
</feature>
<gene>
    <name evidence="1" type="primary">gatC</name>
    <name type="ordered locus">CTL0257</name>
</gene>
<proteinExistence type="inferred from homology"/>
<organism>
    <name type="scientific">Chlamydia trachomatis serovar L2 (strain ATCC VR-902B / DSM 19102 / 434/Bu)</name>
    <dbReference type="NCBI Taxonomy" id="471472"/>
    <lineage>
        <taxon>Bacteria</taxon>
        <taxon>Pseudomonadati</taxon>
        <taxon>Chlamydiota</taxon>
        <taxon>Chlamydiia</taxon>
        <taxon>Chlamydiales</taxon>
        <taxon>Chlamydiaceae</taxon>
        <taxon>Chlamydia/Chlamydophila group</taxon>
        <taxon>Chlamydia</taxon>
    </lineage>
</organism>
<sequence>MTESYVNKEEIISLAKNAALELEDAHVEEFVTSMNDVIALMQEVIAIDISDIILEATVHHFVGPEDLREDMVTSDFTQEEFLSNVPVSLGGLVKVPTVIK</sequence>
<name>GATC_CHLT2</name>
<keyword id="KW-0067">ATP-binding</keyword>
<keyword id="KW-0436">Ligase</keyword>
<keyword id="KW-0547">Nucleotide-binding</keyword>
<keyword id="KW-0648">Protein biosynthesis</keyword>
<dbReference type="EC" id="6.3.5.-" evidence="1"/>
<dbReference type="EMBL" id="AM884176">
    <property type="protein sequence ID" value="CAP03696.1"/>
    <property type="molecule type" value="Genomic_DNA"/>
</dbReference>
<dbReference type="RefSeq" id="WP_009871348.1">
    <property type="nucleotide sequence ID" value="NC_010287.1"/>
</dbReference>
<dbReference type="RefSeq" id="YP_001654341.1">
    <property type="nucleotide sequence ID" value="NC_010287.1"/>
</dbReference>
<dbReference type="SMR" id="B0B9A9"/>
<dbReference type="KEGG" id="ctb:CTL0257"/>
<dbReference type="PATRIC" id="fig|471472.4.peg.278"/>
<dbReference type="HOGENOM" id="CLU_105899_1_2_0"/>
<dbReference type="Proteomes" id="UP001154402">
    <property type="component" value="Chromosome"/>
</dbReference>
<dbReference type="GO" id="GO:0050566">
    <property type="term" value="F:asparaginyl-tRNA synthase (glutamine-hydrolyzing) activity"/>
    <property type="evidence" value="ECO:0007669"/>
    <property type="project" value="RHEA"/>
</dbReference>
<dbReference type="GO" id="GO:0005524">
    <property type="term" value="F:ATP binding"/>
    <property type="evidence" value="ECO:0007669"/>
    <property type="project" value="UniProtKB-KW"/>
</dbReference>
<dbReference type="GO" id="GO:0050567">
    <property type="term" value="F:glutaminyl-tRNA synthase (glutamine-hydrolyzing) activity"/>
    <property type="evidence" value="ECO:0007669"/>
    <property type="project" value="UniProtKB-UniRule"/>
</dbReference>
<dbReference type="GO" id="GO:0006450">
    <property type="term" value="P:regulation of translational fidelity"/>
    <property type="evidence" value="ECO:0007669"/>
    <property type="project" value="InterPro"/>
</dbReference>
<dbReference type="GO" id="GO:0006412">
    <property type="term" value="P:translation"/>
    <property type="evidence" value="ECO:0007669"/>
    <property type="project" value="UniProtKB-UniRule"/>
</dbReference>
<dbReference type="HAMAP" id="MF_00122">
    <property type="entry name" value="GatC"/>
    <property type="match status" value="1"/>
</dbReference>
<dbReference type="InterPro" id="IPR036113">
    <property type="entry name" value="Asp/Glu-ADT_sf_sub_c"/>
</dbReference>
<dbReference type="InterPro" id="IPR003837">
    <property type="entry name" value="GatC"/>
</dbReference>
<dbReference type="NCBIfam" id="TIGR00135">
    <property type="entry name" value="gatC"/>
    <property type="match status" value="1"/>
</dbReference>
<dbReference type="Pfam" id="PF02686">
    <property type="entry name" value="GatC"/>
    <property type="match status" value="1"/>
</dbReference>
<dbReference type="SUPFAM" id="SSF141000">
    <property type="entry name" value="Glu-tRNAGln amidotransferase C subunit"/>
    <property type="match status" value="1"/>
</dbReference>